<comment type="function">
    <text>Mitochondrial membrane ATP synthase (F(1)F(0) ATP synthase or Complex V) produces ATP from ADP in the presence of a proton gradient across the membrane which is generated by electron transport complexes of the respiratory chain. F-type ATPases consist of two structural domains, F(1) - containing the extramembraneous catalytic core and F(0) - containing the membrane proton channel, linked together by a central stalk and a peripheral stalk. During catalysis, ATP synthesis in the catalytic domain of F(1) is coupled via a rotary mechanism of the central stalk subunits to proton translocation. Key component of the proton channel; it may play a direct role in the translocation of protons across the membrane.</text>
</comment>
<comment type="subunit">
    <text>F-type ATPases have 2 components, CF(1) - the catalytic core - and CF(0) - the membrane proton channel. CF(1) has five subunits: alpha(3), beta(3), gamma(1), delta(1), epsilon(1). CF(0) has three main subunits: a, b and c.</text>
</comment>
<comment type="subcellular location">
    <subcellularLocation>
        <location>Mitochondrion inner membrane</location>
        <topology>Multi-pass membrane protein</topology>
    </subcellularLocation>
</comment>
<comment type="similarity">
    <text evidence="2">Belongs to the ATPase A chain family.</text>
</comment>
<proteinExistence type="inferred from homology"/>
<sequence length="224" mass="25141">MMTNLFSVFDPSAIFNLSLNWLSTFLGLLMIPSIYWLMPSRYNIFWNSILLTLHKEFKTLLGPSGHNGSTFIFISLFSLILFNNFMGLFPYIFTSTSHLTLTLSLALPLWLCFMLYGWINHTQHMFAHLVPQGTPAILMPFMVCIETISNIIRPGTLAVRLTANMIAGHLLLTLLGNTGPSMSYLLVTFLLVAQIALLVLESAVTMIQSYVFAVLSTLYSSEVN</sequence>
<protein>
    <recommendedName>
        <fullName>ATP synthase subunit a</fullName>
    </recommendedName>
    <alternativeName>
        <fullName>F-ATPase protein 6</fullName>
    </alternativeName>
</protein>
<name>ATP6_DROYA</name>
<organism>
    <name type="scientific">Drosophila yakuba</name>
    <name type="common">Fruit fly</name>
    <dbReference type="NCBI Taxonomy" id="7245"/>
    <lineage>
        <taxon>Eukaryota</taxon>
        <taxon>Metazoa</taxon>
        <taxon>Ecdysozoa</taxon>
        <taxon>Arthropoda</taxon>
        <taxon>Hexapoda</taxon>
        <taxon>Insecta</taxon>
        <taxon>Pterygota</taxon>
        <taxon>Neoptera</taxon>
        <taxon>Endopterygota</taxon>
        <taxon>Diptera</taxon>
        <taxon>Brachycera</taxon>
        <taxon>Muscomorpha</taxon>
        <taxon>Ephydroidea</taxon>
        <taxon>Drosophilidae</taxon>
        <taxon>Drosophila</taxon>
        <taxon>Sophophora</taxon>
    </lineage>
</organism>
<feature type="chain" id="PRO_0000082118" description="ATP synthase subunit a">
    <location>
        <begin position="1"/>
        <end position="224"/>
    </location>
</feature>
<feature type="transmembrane region" description="Helical" evidence="1">
    <location>
        <begin position="17"/>
        <end position="37"/>
    </location>
</feature>
<feature type="transmembrane region" description="Helical" evidence="1">
    <location>
        <begin position="72"/>
        <end position="92"/>
    </location>
</feature>
<feature type="transmembrane region" description="Helical" evidence="1">
    <location>
        <begin position="99"/>
        <end position="119"/>
    </location>
</feature>
<feature type="transmembrane region" description="Helical" evidence="1">
    <location>
        <begin position="125"/>
        <end position="145"/>
    </location>
</feature>
<feature type="transmembrane region" description="Helical" evidence="1">
    <location>
        <begin position="155"/>
        <end position="175"/>
    </location>
</feature>
<feature type="transmembrane region" description="Helical" evidence="1">
    <location>
        <begin position="184"/>
        <end position="204"/>
    </location>
</feature>
<gene>
    <name type="primary">mt:ATPase6</name>
    <name type="synonym">ATP6</name>
    <name type="synonym">ATPase6</name>
</gene>
<geneLocation type="mitochondrion"/>
<evidence type="ECO:0000255" key="1"/>
<evidence type="ECO:0000305" key="2"/>
<dbReference type="EMBL" id="X00924">
    <property type="protein sequence ID" value="CAA25442.1"/>
    <property type="molecule type" value="Genomic_DNA"/>
</dbReference>
<dbReference type="EMBL" id="X03240">
    <property type="protein sequence ID" value="CAA26989.1"/>
    <property type="molecule type" value="Genomic_DNA"/>
</dbReference>
<dbReference type="PIR" id="C93477">
    <property type="entry name" value="PWFF6Y"/>
</dbReference>
<dbReference type="RefSeq" id="NP_006906.1">
    <property type="nucleotide sequence ID" value="NC_001322.1"/>
</dbReference>
<dbReference type="SMR" id="P00851"/>
<dbReference type="EnsemblMetazoa" id="GeneID_807632_df_mr">
    <property type="protein sequence ID" value="NP_006906.1"/>
    <property type="gene ID" value="GeneID_807632"/>
</dbReference>
<dbReference type="GeneID" id="807632"/>
<dbReference type="KEGG" id="dya:ATP6"/>
<dbReference type="CTD" id="4508"/>
<dbReference type="OrthoDB" id="10068504at2759"/>
<dbReference type="Proteomes" id="UP000002282">
    <property type="component" value="Mitochondrion"/>
</dbReference>
<dbReference type="GO" id="GO:0005743">
    <property type="term" value="C:mitochondrial inner membrane"/>
    <property type="evidence" value="ECO:0007669"/>
    <property type="project" value="UniProtKB-SubCell"/>
</dbReference>
<dbReference type="GO" id="GO:0045259">
    <property type="term" value="C:proton-transporting ATP synthase complex"/>
    <property type="evidence" value="ECO:0007669"/>
    <property type="project" value="UniProtKB-KW"/>
</dbReference>
<dbReference type="GO" id="GO:0046933">
    <property type="term" value="F:proton-transporting ATP synthase activity, rotational mechanism"/>
    <property type="evidence" value="ECO:0007669"/>
    <property type="project" value="TreeGrafter"/>
</dbReference>
<dbReference type="GO" id="GO:0008340">
    <property type="term" value="P:determination of adult lifespan"/>
    <property type="evidence" value="ECO:0007669"/>
    <property type="project" value="EnsemblMetazoa"/>
</dbReference>
<dbReference type="GO" id="GO:0040011">
    <property type="term" value="P:locomotion"/>
    <property type="evidence" value="ECO:0007669"/>
    <property type="project" value="EnsemblMetazoa"/>
</dbReference>
<dbReference type="GO" id="GO:0046716">
    <property type="term" value="P:muscle cell cellular homeostasis"/>
    <property type="evidence" value="ECO:0007669"/>
    <property type="project" value="EnsemblMetazoa"/>
</dbReference>
<dbReference type="GO" id="GO:0070050">
    <property type="term" value="P:neuron cellular homeostasis"/>
    <property type="evidence" value="ECO:0007669"/>
    <property type="project" value="EnsemblMetazoa"/>
</dbReference>
<dbReference type="CDD" id="cd00310">
    <property type="entry name" value="ATP-synt_Fo_a_6"/>
    <property type="match status" value="1"/>
</dbReference>
<dbReference type="FunFam" id="1.20.120.220:FF:000008">
    <property type="entry name" value="ATP synthase subunit a"/>
    <property type="match status" value="1"/>
</dbReference>
<dbReference type="Gene3D" id="1.20.120.220">
    <property type="entry name" value="ATP synthase, F0 complex, subunit A"/>
    <property type="match status" value="1"/>
</dbReference>
<dbReference type="InterPro" id="IPR000568">
    <property type="entry name" value="ATP_synth_F0_asu"/>
</dbReference>
<dbReference type="InterPro" id="IPR023011">
    <property type="entry name" value="ATP_synth_F0_asu_AS"/>
</dbReference>
<dbReference type="InterPro" id="IPR045083">
    <property type="entry name" value="ATP_synth_F0_asu_bact/mt"/>
</dbReference>
<dbReference type="InterPro" id="IPR035908">
    <property type="entry name" value="F0_ATP_A_sf"/>
</dbReference>
<dbReference type="NCBIfam" id="TIGR01131">
    <property type="entry name" value="ATP_synt_6_or_A"/>
    <property type="match status" value="1"/>
</dbReference>
<dbReference type="PANTHER" id="PTHR11410">
    <property type="entry name" value="ATP SYNTHASE SUBUNIT A"/>
    <property type="match status" value="1"/>
</dbReference>
<dbReference type="PANTHER" id="PTHR11410:SF0">
    <property type="entry name" value="ATP SYNTHASE SUBUNIT A"/>
    <property type="match status" value="1"/>
</dbReference>
<dbReference type="Pfam" id="PF00119">
    <property type="entry name" value="ATP-synt_A"/>
    <property type="match status" value="1"/>
</dbReference>
<dbReference type="PRINTS" id="PR00123">
    <property type="entry name" value="ATPASEA"/>
</dbReference>
<dbReference type="SUPFAM" id="SSF81336">
    <property type="entry name" value="F1F0 ATP synthase subunit A"/>
    <property type="match status" value="1"/>
</dbReference>
<dbReference type="PROSITE" id="PS00449">
    <property type="entry name" value="ATPASE_A"/>
    <property type="match status" value="1"/>
</dbReference>
<keyword id="KW-0066">ATP synthesis</keyword>
<keyword id="KW-0138">CF(0)</keyword>
<keyword id="KW-0375">Hydrogen ion transport</keyword>
<keyword id="KW-0406">Ion transport</keyword>
<keyword id="KW-0472">Membrane</keyword>
<keyword id="KW-0496">Mitochondrion</keyword>
<keyword id="KW-0999">Mitochondrion inner membrane</keyword>
<keyword id="KW-0812">Transmembrane</keyword>
<keyword id="KW-1133">Transmembrane helix</keyword>
<keyword id="KW-0813">Transport</keyword>
<accession>P00851</accession>
<reference key="1">
    <citation type="journal article" date="1983" name="Nucleic Acids Res.">
        <title>Nucleotide sequence of a segment of Drosophila mitochondrial DNA that contains the genes for cytochrome c oxidase subunits II and III and ATPase subunit 6.</title>
        <authorList>
            <person name="Clary D.O."/>
            <person name="Wolstenholme D.R."/>
        </authorList>
    </citation>
    <scope>NUCLEOTIDE SEQUENCE [GENOMIC DNA]</scope>
</reference>
<reference key="2">
    <citation type="journal article" date="1985" name="J. Mol. Evol.">
        <title>The mitochondrial DNA molecular of Drosophila yakuba: nucleotide sequence, gene organization, and genetic code.</title>
        <authorList>
            <person name="Clary D.O."/>
            <person name="Wolstenholme D.R."/>
        </authorList>
    </citation>
    <scope>NUCLEOTIDE SEQUENCE [LARGE SCALE GENOMIC DNA]</scope>
    <source>
        <strain>2317.6 Ivory Coast</strain>
    </source>
</reference>